<organism>
    <name type="scientific">Brucella abortus (strain 2308)</name>
    <dbReference type="NCBI Taxonomy" id="359391"/>
    <lineage>
        <taxon>Bacteria</taxon>
        <taxon>Pseudomonadati</taxon>
        <taxon>Pseudomonadota</taxon>
        <taxon>Alphaproteobacteria</taxon>
        <taxon>Hyphomicrobiales</taxon>
        <taxon>Brucellaceae</taxon>
        <taxon>Brucella/Ochrobactrum group</taxon>
        <taxon>Brucella</taxon>
    </lineage>
</organism>
<gene>
    <name evidence="1" type="primary">apaG</name>
    <name type="ordered locus">BAB1_0334</name>
</gene>
<keyword id="KW-1185">Reference proteome</keyword>
<name>APAG_BRUA2</name>
<protein>
    <recommendedName>
        <fullName evidence="1">Protein ApaG</fullName>
    </recommendedName>
</protein>
<proteinExistence type="inferred from homology"/>
<reference key="1">
    <citation type="journal article" date="2005" name="Infect. Immun.">
        <title>Whole-genome analyses of speciation events in pathogenic Brucellae.</title>
        <authorList>
            <person name="Chain P.S."/>
            <person name="Comerci D.J."/>
            <person name="Tolmasky M.E."/>
            <person name="Larimer F.W."/>
            <person name="Malfatti S.A."/>
            <person name="Vergez L.M."/>
            <person name="Aguero F."/>
            <person name="Land M.L."/>
            <person name="Ugalde R.A."/>
            <person name="Garcia E."/>
        </authorList>
    </citation>
    <scope>NUCLEOTIDE SEQUENCE [LARGE SCALE GENOMIC DNA]</scope>
    <source>
        <strain>2308</strain>
    </source>
</reference>
<feature type="chain" id="PRO_1000083609" description="Protein ApaG">
    <location>
        <begin position="1"/>
        <end position="130"/>
    </location>
</feature>
<feature type="domain" description="ApaG" evidence="1">
    <location>
        <begin position="3"/>
        <end position="127"/>
    </location>
</feature>
<accession>Q2YPH0</accession>
<dbReference type="EMBL" id="AM040264">
    <property type="protein sequence ID" value="CAJ10290.1"/>
    <property type="molecule type" value="Genomic_DNA"/>
</dbReference>
<dbReference type="RefSeq" id="WP_002963468.1">
    <property type="nucleotide sequence ID" value="NZ_KN046823.1"/>
</dbReference>
<dbReference type="SMR" id="Q2YPH0"/>
<dbReference type="STRING" id="359391.BAB1_0334"/>
<dbReference type="GeneID" id="93017229"/>
<dbReference type="KEGG" id="bmf:BAB1_0334"/>
<dbReference type="PATRIC" id="fig|359391.11.peg.2379"/>
<dbReference type="HOGENOM" id="CLU_128074_1_0_5"/>
<dbReference type="PhylomeDB" id="Q2YPH0"/>
<dbReference type="Proteomes" id="UP000002719">
    <property type="component" value="Chromosome I"/>
</dbReference>
<dbReference type="GO" id="GO:0070987">
    <property type="term" value="P:error-free translesion synthesis"/>
    <property type="evidence" value="ECO:0007669"/>
    <property type="project" value="TreeGrafter"/>
</dbReference>
<dbReference type="Gene3D" id="2.60.40.1470">
    <property type="entry name" value="ApaG domain"/>
    <property type="match status" value="1"/>
</dbReference>
<dbReference type="HAMAP" id="MF_00791">
    <property type="entry name" value="ApaG"/>
    <property type="match status" value="1"/>
</dbReference>
<dbReference type="InterPro" id="IPR007474">
    <property type="entry name" value="ApaG_domain"/>
</dbReference>
<dbReference type="InterPro" id="IPR036767">
    <property type="entry name" value="ApaG_sf"/>
</dbReference>
<dbReference type="InterPro" id="IPR023065">
    <property type="entry name" value="Uncharacterised_ApaG"/>
</dbReference>
<dbReference type="NCBIfam" id="NF003967">
    <property type="entry name" value="PRK05461.1"/>
    <property type="match status" value="1"/>
</dbReference>
<dbReference type="PANTHER" id="PTHR14289">
    <property type="entry name" value="F-BOX ONLY PROTEIN 3"/>
    <property type="match status" value="1"/>
</dbReference>
<dbReference type="PANTHER" id="PTHR14289:SF16">
    <property type="entry name" value="POLYMERASE DELTA-INTERACTING PROTEIN 2"/>
    <property type="match status" value="1"/>
</dbReference>
<dbReference type="Pfam" id="PF04379">
    <property type="entry name" value="DUF525"/>
    <property type="match status" value="1"/>
</dbReference>
<dbReference type="SUPFAM" id="SSF110069">
    <property type="entry name" value="ApaG-like"/>
    <property type="match status" value="1"/>
</dbReference>
<dbReference type="PROSITE" id="PS51087">
    <property type="entry name" value="APAG"/>
    <property type="match status" value="1"/>
</dbReference>
<evidence type="ECO:0000255" key="1">
    <source>
        <dbReference type="HAMAP-Rule" id="MF_00791"/>
    </source>
</evidence>
<sequence>MYSAVTRGIEVTVEPFYLEVQSEPEENRYVWGYRVTIVNNSSETVQLCSRYWQITDANGHVQEVRGSGVVGKQPVLDPGDSYQYSSGCPLTTSSGVMVGRYQMKGEDGAQFEIEIPAFSLDVPEQRRTLN</sequence>